<accession>C3NEM0</accession>
<organism>
    <name type="scientific">Saccharolobus islandicus (strain Y.G.57.14 / Yellowstone #1)</name>
    <name type="common">Sulfolobus islandicus</name>
    <dbReference type="NCBI Taxonomy" id="439386"/>
    <lineage>
        <taxon>Archaea</taxon>
        <taxon>Thermoproteota</taxon>
        <taxon>Thermoprotei</taxon>
        <taxon>Sulfolobales</taxon>
        <taxon>Sulfolobaceae</taxon>
        <taxon>Saccharolobus</taxon>
    </lineage>
</organism>
<gene>
    <name evidence="1" type="primary">carB</name>
    <name type="ordered locus">YG5714_1497</name>
</gene>
<proteinExistence type="inferred from homology"/>
<comment type="function">
    <text evidence="1">Large subunit of the glutamine-dependent carbamoyl phosphate synthetase (CPSase). CPSase catalyzes the formation of carbamoyl phosphate from the ammonia moiety of glutamine, carbonate, and phosphate donated by ATP, constituting the first step of 2 biosynthetic pathways, one leading to arginine and/or urea and the other to pyrimidine nucleotides. The large subunit (synthetase) binds the substrates ammonia (free or transferred from glutamine from the small subunit), hydrogencarbonate and ATP and carries out an ATP-coupled ligase reaction, activating hydrogencarbonate by forming carboxy phosphate which reacts with ammonia to form carbamoyl phosphate.</text>
</comment>
<comment type="catalytic activity">
    <reaction evidence="1">
        <text>hydrogencarbonate + L-glutamine + 2 ATP + H2O = carbamoyl phosphate + L-glutamate + 2 ADP + phosphate + 2 H(+)</text>
        <dbReference type="Rhea" id="RHEA:18633"/>
        <dbReference type="ChEBI" id="CHEBI:15377"/>
        <dbReference type="ChEBI" id="CHEBI:15378"/>
        <dbReference type="ChEBI" id="CHEBI:17544"/>
        <dbReference type="ChEBI" id="CHEBI:29985"/>
        <dbReference type="ChEBI" id="CHEBI:30616"/>
        <dbReference type="ChEBI" id="CHEBI:43474"/>
        <dbReference type="ChEBI" id="CHEBI:58228"/>
        <dbReference type="ChEBI" id="CHEBI:58359"/>
        <dbReference type="ChEBI" id="CHEBI:456216"/>
        <dbReference type="EC" id="6.3.5.5"/>
    </reaction>
</comment>
<comment type="catalytic activity">
    <molecule>Carbamoyl phosphate synthase large chain</molecule>
    <reaction evidence="1">
        <text>hydrogencarbonate + NH4(+) + 2 ATP = carbamoyl phosphate + 2 ADP + phosphate + 2 H(+)</text>
        <dbReference type="Rhea" id="RHEA:18029"/>
        <dbReference type="ChEBI" id="CHEBI:15378"/>
        <dbReference type="ChEBI" id="CHEBI:17544"/>
        <dbReference type="ChEBI" id="CHEBI:28938"/>
        <dbReference type="ChEBI" id="CHEBI:30616"/>
        <dbReference type="ChEBI" id="CHEBI:43474"/>
        <dbReference type="ChEBI" id="CHEBI:58228"/>
        <dbReference type="ChEBI" id="CHEBI:456216"/>
        <dbReference type="EC" id="6.3.4.16"/>
    </reaction>
</comment>
<comment type="cofactor">
    <cofactor evidence="1">
        <name>Mg(2+)</name>
        <dbReference type="ChEBI" id="CHEBI:18420"/>
    </cofactor>
    <cofactor evidence="1">
        <name>Mn(2+)</name>
        <dbReference type="ChEBI" id="CHEBI:29035"/>
    </cofactor>
    <text evidence="1">Binds 4 Mg(2+) or Mn(2+) ions per subunit.</text>
</comment>
<comment type="pathway">
    <text evidence="1">Amino-acid biosynthesis; L-arginine biosynthesis; carbamoyl phosphate from bicarbonate: step 1/1.</text>
</comment>
<comment type="pathway">
    <text evidence="1">Pyrimidine metabolism; UMP biosynthesis via de novo pathway; (S)-dihydroorotate from bicarbonate: step 1/3.</text>
</comment>
<comment type="subunit">
    <text evidence="1">Composed of two chains; the small (or glutamine) chain promotes the hydrolysis of glutamine to ammonia, which is used by the large (or ammonia) chain to synthesize carbamoyl phosphate. Tetramer of heterodimers (alpha,beta)4.</text>
</comment>
<comment type="domain">
    <text evidence="1">The large subunit is composed of 2 ATP-grasp domains that are involved in binding the 2 ATP molecules needed for carbamoyl phosphate synthesis. The N-terminal ATP-grasp domain (referred to as the carboxyphosphate synthetic component) catalyzes the ATP-dependent phosphorylation of hydrogencarbonate to carboxyphosphate and the subsequent nucleophilic attack by ammonia to form a carbamate intermediate. The C-terminal ATP-grasp domain (referred to as the carbamoyl phosphate synthetic component) then catalyzes the phosphorylation of carbamate with the second ATP to form the end product carbamoyl phosphate. The reactive and unstable enzyme intermediates are sequentially channeled from one active site to the next through the interior of the protein over a distance of at least 96 A.</text>
</comment>
<comment type="similarity">
    <text evidence="1">Belongs to the CarB family.</text>
</comment>
<name>CARB_SACI7</name>
<feature type="chain" id="PRO_1000213885" description="Carbamoyl phosphate synthase large chain">
    <location>
        <begin position="1"/>
        <end position="1051"/>
    </location>
</feature>
<feature type="domain" description="ATP-grasp 1" evidence="1">
    <location>
        <begin position="131"/>
        <end position="325"/>
    </location>
</feature>
<feature type="domain" description="ATP-grasp 2" evidence="1">
    <location>
        <begin position="673"/>
        <end position="863"/>
    </location>
</feature>
<feature type="domain" description="MGS-like" evidence="1">
    <location>
        <begin position="930"/>
        <end position="1051"/>
    </location>
</feature>
<feature type="region of interest" description="Carboxyphosphate synthetic domain" evidence="1">
    <location>
        <begin position="1"/>
        <end position="399"/>
    </location>
</feature>
<feature type="region of interest" description="Oligomerization domain" evidence="1">
    <location>
        <begin position="400"/>
        <end position="548"/>
    </location>
</feature>
<feature type="region of interest" description="Carbamoyl phosphate synthetic domain" evidence="1">
    <location>
        <begin position="549"/>
        <end position="930"/>
    </location>
</feature>
<feature type="region of interest" description="Allosteric domain" evidence="1">
    <location>
        <begin position="931"/>
        <end position="1051"/>
    </location>
</feature>
<feature type="binding site" evidence="1">
    <location>
        <position position="127"/>
    </location>
    <ligand>
        <name>ATP</name>
        <dbReference type="ChEBI" id="CHEBI:30616"/>
        <label>1</label>
    </ligand>
</feature>
<feature type="binding site" evidence="1">
    <location>
        <position position="167"/>
    </location>
    <ligand>
        <name>ATP</name>
        <dbReference type="ChEBI" id="CHEBI:30616"/>
        <label>1</label>
    </ligand>
</feature>
<feature type="binding site" evidence="1">
    <location>
        <position position="173"/>
    </location>
    <ligand>
        <name>ATP</name>
        <dbReference type="ChEBI" id="CHEBI:30616"/>
        <label>1</label>
    </ligand>
</feature>
<feature type="binding site" evidence="1">
    <location>
        <position position="174"/>
    </location>
    <ligand>
        <name>ATP</name>
        <dbReference type="ChEBI" id="CHEBI:30616"/>
        <label>1</label>
    </ligand>
</feature>
<feature type="binding site" evidence="1">
    <location>
        <position position="206"/>
    </location>
    <ligand>
        <name>ATP</name>
        <dbReference type="ChEBI" id="CHEBI:30616"/>
        <label>1</label>
    </ligand>
</feature>
<feature type="binding site" evidence="1">
    <location>
        <position position="208"/>
    </location>
    <ligand>
        <name>ATP</name>
        <dbReference type="ChEBI" id="CHEBI:30616"/>
        <label>1</label>
    </ligand>
</feature>
<feature type="binding site" evidence="1">
    <location>
        <position position="213"/>
    </location>
    <ligand>
        <name>ATP</name>
        <dbReference type="ChEBI" id="CHEBI:30616"/>
        <label>1</label>
    </ligand>
</feature>
<feature type="binding site" evidence="1">
    <location>
        <position position="239"/>
    </location>
    <ligand>
        <name>ATP</name>
        <dbReference type="ChEBI" id="CHEBI:30616"/>
        <label>1</label>
    </ligand>
</feature>
<feature type="binding site" evidence="1">
    <location>
        <position position="240"/>
    </location>
    <ligand>
        <name>ATP</name>
        <dbReference type="ChEBI" id="CHEBI:30616"/>
        <label>1</label>
    </ligand>
</feature>
<feature type="binding site" evidence="1">
    <location>
        <position position="241"/>
    </location>
    <ligand>
        <name>ATP</name>
        <dbReference type="ChEBI" id="CHEBI:30616"/>
        <label>1</label>
    </ligand>
</feature>
<feature type="binding site" evidence="1">
    <location>
        <position position="282"/>
    </location>
    <ligand>
        <name>ATP</name>
        <dbReference type="ChEBI" id="CHEBI:30616"/>
        <label>1</label>
    </ligand>
</feature>
<feature type="binding site" evidence="1">
    <location>
        <position position="282"/>
    </location>
    <ligand>
        <name>Mg(2+)</name>
        <dbReference type="ChEBI" id="CHEBI:18420"/>
        <label>1</label>
    </ligand>
</feature>
<feature type="binding site" evidence="1">
    <location>
        <position position="282"/>
    </location>
    <ligand>
        <name>Mn(2+)</name>
        <dbReference type="ChEBI" id="CHEBI:29035"/>
        <label>1</label>
    </ligand>
</feature>
<feature type="binding site" evidence="1">
    <location>
        <position position="296"/>
    </location>
    <ligand>
        <name>ATP</name>
        <dbReference type="ChEBI" id="CHEBI:30616"/>
        <label>1</label>
    </ligand>
</feature>
<feature type="binding site" evidence="1">
    <location>
        <position position="296"/>
    </location>
    <ligand>
        <name>Mg(2+)</name>
        <dbReference type="ChEBI" id="CHEBI:18420"/>
        <label>1</label>
    </ligand>
</feature>
<feature type="binding site" evidence="1">
    <location>
        <position position="296"/>
    </location>
    <ligand>
        <name>Mg(2+)</name>
        <dbReference type="ChEBI" id="CHEBI:18420"/>
        <label>2</label>
    </ligand>
</feature>
<feature type="binding site" evidence="1">
    <location>
        <position position="296"/>
    </location>
    <ligand>
        <name>Mn(2+)</name>
        <dbReference type="ChEBI" id="CHEBI:29035"/>
        <label>1</label>
    </ligand>
</feature>
<feature type="binding site" evidence="1">
    <location>
        <position position="296"/>
    </location>
    <ligand>
        <name>Mn(2+)</name>
        <dbReference type="ChEBI" id="CHEBI:29035"/>
        <label>2</label>
    </ligand>
</feature>
<feature type="binding site" evidence="1">
    <location>
        <position position="298"/>
    </location>
    <ligand>
        <name>Mg(2+)</name>
        <dbReference type="ChEBI" id="CHEBI:18420"/>
        <label>2</label>
    </ligand>
</feature>
<feature type="binding site" evidence="1">
    <location>
        <position position="298"/>
    </location>
    <ligand>
        <name>Mn(2+)</name>
        <dbReference type="ChEBI" id="CHEBI:29035"/>
        <label>2</label>
    </ligand>
</feature>
<feature type="binding site" evidence="1">
    <location>
        <position position="709"/>
    </location>
    <ligand>
        <name>ATP</name>
        <dbReference type="ChEBI" id="CHEBI:30616"/>
        <label>2</label>
    </ligand>
</feature>
<feature type="binding site" evidence="1">
    <location>
        <position position="748"/>
    </location>
    <ligand>
        <name>ATP</name>
        <dbReference type="ChEBI" id="CHEBI:30616"/>
        <label>2</label>
    </ligand>
</feature>
<feature type="binding site" evidence="1">
    <location>
        <position position="750"/>
    </location>
    <ligand>
        <name>ATP</name>
        <dbReference type="ChEBI" id="CHEBI:30616"/>
        <label>2</label>
    </ligand>
</feature>
<feature type="binding site" evidence="1">
    <location>
        <position position="755"/>
    </location>
    <ligand>
        <name>ATP</name>
        <dbReference type="ChEBI" id="CHEBI:30616"/>
        <label>2</label>
    </ligand>
</feature>
<feature type="binding site" evidence="1">
    <location>
        <position position="779"/>
    </location>
    <ligand>
        <name>ATP</name>
        <dbReference type="ChEBI" id="CHEBI:30616"/>
        <label>2</label>
    </ligand>
</feature>
<feature type="binding site" evidence="1">
    <location>
        <position position="780"/>
    </location>
    <ligand>
        <name>ATP</name>
        <dbReference type="ChEBI" id="CHEBI:30616"/>
        <label>2</label>
    </ligand>
</feature>
<feature type="binding site" evidence="1">
    <location>
        <position position="781"/>
    </location>
    <ligand>
        <name>ATP</name>
        <dbReference type="ChEBI" id="CHEBI:30616"/>
        <label>2</label>
    </ligand>
</feature>
<feature type="binding site" evidence="1">
    <location>
        <position position="782"/>
    </location>
    <ligand>
        <name>ATP</name>
        <dbReference type="ChEBI" id="CHEBI:30616"/>
        <label>2</label>
    </ligand>
</feature>
<feature type="binding site" evidence="1">
    <location>
        <position position="822"/>
    </location>
    <ligand>
        <name>ATP</name>
        <dbReference type="ChEBI" id="CHEBI:30616"/>
        <label>2</label>
    </ligand>
</feature>
<feature type="binding site" evidence="1">
    <location>
        <position position="822"/>
    </location>
    <ligand>
        <name>Mg(2+)</name>
        <dbReference type="ChEBI" id="CHEBI:18420"/>
        <label>3</label>
    </ligand>
</feature>
<feature type="binding site" evidence="1">
    <location>
        <position position="822"/>
    </location>
    <ligand>
        <name>Mn(2+)</name>
        <dbReference type="ChEBI" id="CHEBI:29035"/>
        <label>3</label>
    </ligand>
</feature>
<feature type="binding site" evidence="1">
    <location>
        <position position="834"/>
    </location>
    <ligand>
        <name>ATP</name>
        <dbReference type="ChEBI" id="CHEBI:30616"/>
        <label>2</label>
    </ligand>
</feature>
<feature type="binding site" evidence="1">
    <location>
        <position position="834"/>
    </location>
    <ligand>
        <name>Mg(2+)</name>
        <dbReference type="ChEBI" id="CHEBI:18420"/>
        <label>3</label>
    </ligand>
</feature>
<feature type="binding site" evidence="1">
    <location>
        <position position="834"/>
    </location>
    <ligand>
        <name>Mg(2+)</name>
        <dbReference type="ChEBI" id="CHEBI:18420"/>
        <label>4</label>
    </ligand>
</feature>
<feature type="binding site" evidence="1">
    <location>
        <position position="834"/>
    </location>
    <ligand>
        <name>Mn(2+)</name>
        <dbReference type="ChEBI" id="CHEBI:29035"/>
        <label>3</label>
    </ligand>
</feature>
<feature type="binding site" evidence="1">
    <location>
        <position position="834"/>
    </location>
    <ligand>
        <name>Mn(2+)</name>
        <dbReference type="ChEBI" id="CHEBI:29035"/>
        <label>4</label>
    </ligand>
</feature>
<feature type="binding site" evidence="1">
    <location>
        <position position="836"/>
    </location>
    <ligand>
        <name>Mg(2+)</name>
        <dbReference type="ChEBI" id="CHEBI:18420"/>
        <label>4</label>
    </ligand>
</feature>
<feature type="binding site" evidence="1">
    <location>
        <position position="836"/>
    </location>
    <ligand>
        <name>Mn(2+)</name>
        <dbReference type="ChEBI" id="CHEBI:29035"/>
        <label>4</label>
    </ligand>
</feature>
<protein>
    <recommendedName>
        <fullName evidence="1">Carbamoyl phosphate synthase large chain</fullName>
        <ecNumber evidence="1">6.3.4.16</ecNumber>
        <ecNumber evidence="1">6.3.5.5</ecNumber>
    </recommendedName>
    <alternativeName>
        <fullName evidence="1">Carbamoyl phosphate synthetase ammonia chain</fullName>
    </alternativeName>
</protein>
<sequence>MKETPKKVLVIGSGPIKIAEAAEFDYSGSQALKALKEEGIETVLVNSNVATVQTSKKFADKLYMLPVVWWAVEKVIEKERPDGIMIGFGGQTALNVGVDLHKKGVLQKYGVKVLGTQIDGIEKALSREKFRETMIENNLPVPPSLSARSEEEAIKNAKIVGYPVMVRVSFNLGGRGSMVAWTEEDLKKNIRRALSQSYIGEVLIEKYLYHWIELEYEVMRDKKGNSSVIACIENLDPMGVHTGESTVVAPCQTLDNLEYQNMRTYTIEVARSINLIGECNVQFALNPRGYEYYIIETNPRMSRSSALASKATGYPLAYVSAKLALGYELHEVINKVSGRTCACFEPSLDYIVTKIPRWDLSKFENVDQSLATEMMSVGEVMSIGRSFEESLQKAVRMLDIGEPGVVGGKIYEAKMSKVEALKYLKERRPYWFLYVAKAFKEGATIDEVYEVTGISKFFLNKIKGLVDFYETLKILKEIDEETLKLAKKLGFSDEQISKALNKSTQYVRKIRDQSNIIPVVKLIDTLAGEWPSVTNYMYLTYNGTEDDLEFSQGNKLLIVGAGGFRIGVSVEFDWSVVSLMEAASKYFDEVAVLNYNPETVSTDWDIARKLYFDEINVERVLDLIKKEKFRYVATFSGGQIGNSIAKELEENGVRLLGTSGSSVDIAENREKFSKLLDKLGISQPNWVSATSLEEIKKFVNEVGFPVLVRPSYVLSGSSMKIAYSEEELYEYVRRATEISPKYPVVISKYIENAIEAEVDGVSDGNRVLGITLEHVEEAGVHSGDATMSIPFRKLSENSVNKMRENVLSLARELNIKGPFNVQFVVKDNTPHIIELNLRASRSMPFSSKAKGINLINEAMKAIFNGLDFSEDYYEPPSKYWAVKSPQFSWSQLRGTYPFLGPEMKSTGEAASFGVTFYDALLKSWLSSIPNRIPNKNGIALVYGDKNLDYLKDTAVNLVKFGLTVYSISELPLQGIETIDKTKAEELVRAKKVEIVVTDGYLKKFDYNIRRTAVDYNIPVILNGRLGYEVSKAFLDYDSLTFFEISEYGGGI</sequence>
<dbReference type="EC" id="6.3.4.16" evidence="1"/>
<dbReference type="EC" id="6.3.5.5" evidence="1"/>
<dbReference type="EMBL" id="CP001403">
    <property type="protein sequence ID" value="ACP45759.1"/>
    <property type="molecule type" value="Genomic_DNA"/>
</dbReference>
<dbReference type="RefSeq" id="WP_012713783.1">
    <property type="nucleotide sequence ID" value="NC_012622.1"/>
</dbReference>
<dbReference type="SMR" id="C3NEM0"/>
<dbReference type="GeneID" id="7807980"/>
<dbReference type="KEGG" id="siy:YG5714_1497"/>
<dbReference type="HOGENOM" id="CLU_000513_1_3_2"/>
<dbReference type="UniPathway" id="UPA00068">
    <property type="reaction ID" value="UER00171"/>
</dbReference>
<dbReference type="UniPathway" id="UPA00070">
    <property type="reaction ID" value="UER00115"/>
</dbReference>
<dbReference type="Proteomes" id="UP000002308">
    <property type="component" value="Chromosome"/>
</dbReference>
<dbReference type="GO" id="GO:0005737">
    <property type="term" value="C:cytoplasm"/>
    <property type="evidence" value="ECO:0007669"/>
    <property type="project" value="TreeGrafter"/>
</dbReference>
<dbReference type="GO" id="GO:0005524">
    <property type="term" value="F:ATP binding"/>
    <property type="evidence" value="ECO:0007669"/>
    <property type="project" value="UniProtKB-UniRule"/>
</dbReference>
<dbReference type="GO" id="GO:0004087">
    <property type="term" value="F:carbamoyl-phosphate synthase (ammonia) activity"/>
    <property type="evidence" value="ECO:0007669"/>
    <property type="project" value="RHEA"/>
</dbReference>
<dbReference type="GO" id="GO:0004088">
    <property type="term" value="F:carbamoyl-phosphate synthase (glutamine-hydrolyzing) activity"/>
    <property type="evidence" value="ECO:0007669"/>
    <property type="project" value="UniProtKB-UniRule"/>
</dbReference>
<dbReference type="GO" id="GO:0046872">
    <property type="term" value="F:metal ion binding"/>
    <property type="evidence" value="ECO:0007669"/>
    <property type="project" value="UniProtKB-KW"/>
</dbReference>
<dbReference type="GO" id="GO:0044205">
    <property type="term" value="P:'de novo' UMP biosynthetic process"/>
    <property type="evidence" value="ECO:0007669"/>
    <property type="project" value="UniProtKB-UniRule"/>
</dbReference>
<dbReference type="GO" id="GO:0006541">
    <property type="term" value="P:glutamine metabolic process"/>
    <property type="evidence" value="ECO:0007669"/>
    <property type="project" value="TreeGrafter"/>
</dbReference>
<dbReference type="GO" id="GO:0006526">
    <property type="term" value="P:L-arginine biosynthetic process"/>
    <property type="evidence" value="ECO:0007669"/>
    <property type="project" value="UniProtKB-UniRule"/>
</dbReference>
<dbReference type="FunFam" id="1.10.1030.10:FF:000002">
    <property type="entry name" value="Carbamoyl-phosphate synthase large chain"/>
    <property type="match status" value="1"/>
</dbReference>
<dbReference type="FunFam" id="3.30.1490.20:FF:000001">
    <property type="entry name" value="Carbamoyl-phosphate synthase large chain"/>
    <property type="match status" value="1"/>
</dbReference>
<dbReference type="FunFam" id="3.30.470.20:FF:000001">
    <property type="entry name" value="Carbamoyl-phosphate synthase large chain"/>
    <property type="match status" value="1"/>
</dbReference>
<dbReference type="FunFam" id="3.30.470.20:FF:000026">
    <property type="entry name" value="Carbamoyl-phosphate synthase large chain"/>
    <property type="match status" value="1"/>
</dbReference>
<dbReference type="FunFam" id="3.40.50.20:FF:000001">
    <property type="entry name" value="Carbamoyl-phosphate synthase large chain"/>
    <property type="match status" value="2"/>
</dbReference>
<dbReference type="Gene3D" id="3.40.50.20">
    <property type="match status" value="2"/>
</dbReference>
<dbReference type="Gene3D" id="3.30.1490.20">
    <property type="entry name" value="ATP-grasp fold, A domain"/>
    <property type="match status" value="1"/>
</dbReference>
<dbReference type="Gene3D" id="3.30.470.20">
    <property type="entry name" value="ATP-grasp fold, B domain"/>
    <property type="match status" value="2"/>
</dbReference>
<dbReference type="Gene3D" id="1.10.1030.10">
    <property type="entry name" value="Carbamoyl-phosphate synthetase, large subunit oligomerisation domain"/>
    <property type="match status" value="1"/>
</dbReference>
<dbReference type="HAMAP" id="MF_01210_A">
    <property type="entry name" value="CPSase_L_chain_A"/>
    <property type="match status" value="1"/>
</dbReference>
<dbReference type="InterPro" id="IPR011761">
    <property type="entry name" value="ATP-grasp"/>
</dbReference>
<dbReference type="InterPro" id="IPR013815">
    <property type="entry name" value="ATP_grasp_subdomain_1"/>
</dbReference>
<dbReference type="InterPro" id="IPR006275">
    <property type="entry name" value="CarbamoylP_synth_lsu"/>
</dbReference>
<dbReference type="InterPro" id="IPR005480">
    <property type="entry name" value="CarbamoylP_synth_lsu_oligo"/>
</dbReference>
<dbReference type="InterPro" id="IPR036897">
    <property type="entry name" value="CarbamoylP_synth_lsu_oligo_sf"/>
</dbReference>
<dbReference type="InterPro" id="IPR005479">
    <property type="entry name" value="CbamoylP_synth_lsu-like_ATP-bd"/>
</dbReference>
<dbReference type="InterPro" id="IPR005483">
    <property type="entry name" value="CbamoylP_synth_lsu_CPSase_dom"/>
</dbReference>
<dbReference type="InterPro" id="IPR011607">
    <property type="entry name" value="MGS-like_dom"/>
</dbReference>
<dbReference type="InterPro" id="IPR016185">
    <property type="entry name" value="PreATP-grasp_dom_sf"/>
</dbReference>
<dbReference type="NCBIfam" id="TIGR01369">
    <property type="entry name" value="CPSaseII_lrg"/>
    <property type="match status" value="1"/>
</dbReference>
<dbReference type="NCBIfam" id="NF003671">
    <property type="entry name" value="PRK05294.1"/>
    <property type="match status" value="1"/>
</dbReference>
<dbReference type="NCBIfam" id="NF009455">
    <property type="entry name" value="PRK12815.1"/>
    <property type="match status" value="1"/>
</dbReference>
<dbReference type="PANTHER" id="PTHR11405:SF53">
    <property type="entry name" value="CARBAMOYL-PHOSPHATE SYNTHASE [AMMONIA], MITOCHONDRIAL"/>
    <property type="match status" value="1"/>
</dbReference>
<dbReference type="PANTHER" id="PTHR11405">
    <property type="entry name" value="CARBAMOYLTRANSFERASE FAMILY MEMBER"/>
    <property type="match status" value="1"/>
</dbReference>
<dbReference type="Pfam" id="PF02786">
    <property type="entry name" value="CPSase_L_D2"/>
    <property type="match status" value="2"/>
</dbReference>
<dbReference type="Pfam" id="PF02787">
    <property type="entry name" value="CPSase_L_D3"/>
    <property type="match status" value="1"/>
</dbReference>
<dbReference type="PRINTS" id="PR00098">
    <property type="entry name" value="CPSASE"/>
</dbReference>
<dbReference type="SMART" id="SM01096">
    <property type="entry name" value="CPSase_L_D3"/>
    <property type="match status" value="1"/>
</dbReference>
<dbReference type="SUPFAM" id="SSF48108">
    <property type="entry name" value="Carbamoyl phosphate synthetase, large subunit connection domain"/>
    <property type="match status" value="1"/>
</dbReference>
<dbReference type="SUPFAM" id="SSF56059">
    <property type="entry name" value="Glutathione synthetase ATP-binding domain-like"/>
    <property type="match status" value="2"/>
</dbReference>
<dbReference type="SUPFAM" id="SSF52440">
    <property type="entry name" value="PreATP-grasp domain"/>
    <property type="match status" value="2"/>
</dbReference>
<dbReference type="PROSITE" id="PS50975">
    <property type="entry name" value="ATP_GRASP"/>
    <property type="match status" value="2"/>
</dbReference>
<dbReference type="PROSITE" id="PS00867">
    <property type="entry name" value="CPSASE_2"/>
    <property type="match status" value="1"/>
</dbReference>
<dbReference type="PROSITE" id="PS51855">
    <property type="entry name" value="MGS"/>
    <property type="match status" value="1"/>
</dbReference>
<keyword id="KW-0028">Amino-acid biosynthesis</keyword>
<keyword id="KW-0055">Arginine biosynthesis</keyword>
<keyword id="KW-0067">ATP-binding</keyword>
<keyword id="KW-0436">Ligase</keyword>
<keyword id="KW-0460">Magnesium</keyword>
<keyword id="KW-0464">Manganese</keyword>
<keyword id="KW-0479">Metal-binding</keyword>
<keyword id="KW-0547">Nucleotide-binding</keyword>
<keyword id="KW-0665">Pyrimidine biosynthesis</keyword>
<keyword id="KW-0677">Repeat</keyword>
<reference key="1">
    <citation type="journal article" date="2009" name="Proc. Natl. Acad. Sci. U.S.A.">
        <title>Biogeography of the Sulfolobus islandicus pan-genome.</title>
        <authorList>
            <person name="Reno M.L."/>
            <person name="Held N.L."/>
            <person name="Fields C.J."/>
            <person name="Burke P.V."/>
            <person name="Whitaker R.J."/>
        </authorList>
    </citation>
    <scope>NUCLEOTIDE SEQUENCE [LARGE SCALE GENOMIC DNA]</scope>
    <source>
        <strain>Y.G.57.14 / Yellowstone #1</strain>
    </source>
</reference>
<evidence type="ECO:0000255" key="1">
    <source>
        <dbReference type="HAMAP-Rule" id="MF_01210"/>
    </source>
</evidence>